<accession>Q743Y3</accession>
<keyword id="KW-0067">ATP-binding</keyword>
<keyword id="KW-0173">Coenzyme A biosynthesis</keyword>
<keyword id="KW-0963">Cytoplasm</keyword>
<keyword id="KW-0418">Kinase</keyword>
<keyword id="KW-0479">Metal-binding</keyword>
<keyword id="KW-0547">Nucleotide-binding</keyword>
<keyword id="KW-0630">Potassium</keyword>
<keyword id="KW-1185">Reference proteome</keyword>
<keyword id="KW-0808">Transferase</keyword>
<comment type="function">
    <text evidence="1">Catalyzes the phosphorylation of pantothenate (Pan), the first step in CoA biosynthesis.</text>
</comment>
<comment type="catalytic activity">
    <reaction evidence="1">
        <text>(R)-pantothenate + ATP = (R)-4'-phosphopantothenate + ADP + H(+)</text>
        <dbReference type="Rhea" id="RHEA:16373"/>
        <dbReference type="ChEBI" id="CHEBI:10986"/>
        <dbReference type="ChEBI" id="CHEBI:15378"/>
        <dbReference type="ChEBI" id="CHEBI:29032"/>
        <dbReference type="ChEBI" id="CHEBI:30616"/>
        <dbReference type="ChEBI" id="CHEBI:456216"/>
        <dbReference type="EC" id="2.7.1.33"/>
    </reaction>
</comment>
<comment type="cofactor">
    <cofactor evidence="1">
        <name>NH4(+)</name>
        <dbReference type="ChEBI" id="CHEBI:28938"/>
    </cofactor>
    <cofactor evidence="1">
        <name>K(+)</name>
        <dbReference type="ChEBI" id="CHEBI:29103"/>
    </cofactor>
    <text evidence="1">A monovalent cation. Ammonium or potassium.</text>
</comment>
<comment type="pathway">
    <text evidence="1">Cofactor biosynthesis; coenzyme A biosynthesis; CoA from (R)-pantothenate: step 1/5.</text>
</comment>
<comment type="subunit">
    <text evidence="1">Homodimer.</text>
</comment>
<comment type="subcellular location">
    <subcellularLocation>
        <location evidence="1">Cytoplasm</location>
    </subcellularLocation>
</comment>
<comment type="similarity">
    <text evidence="1">Belongs to the type III pantothenate kinase family.</text>
</comment>
<sequence length="271" mass="28996">MLLAIDVRNTHTVVGLISGSKEHAKVVQQWRIRTESEITADELALTIDGLIGDDSERLTGAAALSTVPSVLHEVRLMLDQYWPSVPHVLIEPGVRTGIPLLVDNPKEVGADRIVNCLAAFHRFQSPAIVIDFGSSICVDVVSAKGEFLGGAIAPGLQVSSDAAAARSAALRRVELARPRSVIGKNTVECMQAGAVFGFAGLVDGLVGRIREDVPGFGGDDVAIVATGHTAPLLLPELDTVSHYDQHLTLHGLRLVFERNRDAQRGRLKTAR</sequence>
<name>COAX_MYCPA</name>
<dbReference type="EC" id="2.7.1.33" evidence="1"/>
<dbReference type="EMBL" id="AE016958">
    <property type="protein sequence ID" value="AAS02775.1"/>
    <property type="molecule type" value="Genomic_DNA"/>
</dbReference>
<dbReference type="RefSeq" id="WP_003875614.1">
    <property type="nucleotide sequence ID" value="NZ_CP106873.1"/>
</dbReference>
<dbReference type="SMR" id="Q743Y3"/>
<dbReference type="STRING" id="262316.MAP_0458"/>
<dbReference type="KEGG" id="mpa:MAP_0458"/>
<dbReference type="eggNOG" id="COG1521">
    <property type="taxonomic scope" value="Bacteria"/>
</dbReference>
<dbReference type="HOGENOM" id="CLU_066627_1_0_11"/>
<dbReference type="UniPathway" id="UPA00241">
    <property type="reaction ID" value="UER00352"/>
</dbReference>
<dbReference type="Proteomes" id="UP000000580">
    <property type="component" value="Chromosome"/>
</dbReference>
<dbReference type="GO" id="GO:0005737">
    <property type="term" value="C:cytoplasm"/>
    <property type="evidence" value="ECO:0007669"/>
    <property type="project" value="UniProtKB-SubCell"/>
</dbReference>
<dbReference type="GO" id="GO:0005524">
    <property type="term" value="F:ATP binding"/>
    <property type="evidence" value="ECO:0007669"/>
    <property type="project" value="UniProtKB-UniRule"/>
</dbReference>
<dbReference type="GO" id="GO:0046872">
    <property type="term" value="F:metal ion binding"/>
    <property type="evidence" value="ECO:0007669"/>
    <property type="project" value="UniProtKB-KW"/>
</dbReference>
<dbReference type="GO" id="GO:0004594">
    <property type="term" value="F:pantothenate kinase activity"/>
    <property type="evidence" value="ECO:0007669"/>
    <property type="project" value="UniProtKB-UniRule"/>
</dbReference>
<dbReference type="GO" id="GO:0015937">
    <property type="term" value="P:coenzyme A biosynthetic process"/>
    <property type="evidence" value="ECO:0007669"/>
    <property type="project" value="UniProtKB-UniRule"/>
</dbReference>
<dbReference type="CDD" id="cd24015">
    <property type="entry name" value="ASKHA_NBD_PanK-III"/>
    <property type="match status" value="1"/>
</dbReference>
<dbReference type="FunFam" id="3.30.420.40:FF:000146">
    <property type="entry name" value="Type III pantothenate kinase"/>
    <property type="match status" value="1"/>
</dbReference>
<dbReference type="Gene3D" id="3.30.420.40">
    <property type="match status" value="2"/>
</dbReference>
<dbReference type="HAMAP" id="MF_01274">
    <property type="entry name" value="Pantothen_kinase_3"/>
    <property type="match status" value="1"/>
</dbReference>
<dbReference type="InterPro" id="IPR043129">
    <property type="entry name" value="ATPase_NBD"/>
</dbReference>
<dbReference type="InterPro" id="IPR004619">
    <property type="entry name" value="Type_III_PanK"/>
</dbReference>
<dbReference type="NCBIfam" id="TIGR00671">
    <property type="entry name" value="baf"/>
    <property type="match status" value="1"/>
</dbReference>
<dbReference type="NCBIfam" id="NF009845">
    <property type="entry name" value="PRK13318.1-3"/>
    <property type="match status" value="1"/>
</dbReference>
<dbReference type="PANTHER" id="PTHR34265">
    <property type="entry name" value="TYPE III PANTOTHENATE KINASE"/>
    <property type="match status" value="1"/>
</dbReference>
<dbReference type="PANTHER" id="PTHR34265:SF1">
    <property type="entry name" value="TYPE III PANTOTHENATE KINASE"/>
    <property type="match status" value="1"/>
</dbReference>
<dbReference type="Pfam" id="PF03309">
    <property type="entry name" value="Pan_kinase"/>
    <property type="match status" value="1"/>
</dbReference>
<dbReference type="SUPFAM" id="SSF53067">
    <property type="entry name" value="Actin-like ATPase domain"/>
    <property type="match status" value="2"/>
</dbReference>
<proteinExistence type="inferred from homology"/>
<gene>
    <name evidence="1" type="primary">coaX</name>
    <name type="ordered locus">MAP_0458</name>
</gene>
<evidence type="ECO:0000255" key="1">
    <source>
        <dbReference type="HAMAP-Rule" id="MF_01274"/>
    </source>
</evidence>
<reference key="1">
    <citation type="journal article" date="2005" name="Proc. Natl. Acad. Sci. U.S.A.">
        <title>The complete genome sequence of Mycobacterium avium subspecies paratuberculosis.</title>
        <authorList>
            <person name="Li L."/>
            <person name="Bannantine J.P."/>
            <person name="Zhang Q."/>
            <person name="Amonsin A."/>
            <person name="May B.J."/>
            <person name="Alt D."/>
            <person name="Banerji N."/>
            <person name="Kanjilal S."/>
            <person name="Kapur V."/>
        </authorList>
    </citation>
    <scope>NUCLEOTIDE SEQUENCE [LARGE SCALE GENOMIC DNA]</scope>
    <source>
        <strain>ATCC BAA-968 / K-10</strain>
    </source>
</reference>
<organism>
    <name type="scientific">Mycolicibacterium paratuberculosis (strain ATCC BAA-968 / K-10)</name>
    <name type="common">Mycobacterium paratuberculosis</name>
    <dbReference type="NCBI Taxonomy" id="262316"/>
    <lineage>
        <taxon>Bacteria</taxon>
        <taxon>Bacillati</taxon>
        <taxon>Actinomycetota</taxon>
        <taxon>Actinomycetes</taxon>
        <taxon>Mycobacteriales</taxon>
        <taxon>Mycobacteriaceae</taxon>
        <taxon>Mycobacterium</taxon>
        <taxon>Mycobacterium avium complex (MAC)</taxon>
    </lineage>
</organism>
<protein>
    <recommendedName>
        <fullName evidence="1">Type III pantothenate kinase</fullName>
        <ecNumber evidence="1">2.7.1.33</ecNumber>
    </recommendedName>
    <alternativeName>
        <fullName evidence="1">PanK-III</fullName>
    </alternativeName>
    <alternativeName>
        <fullName evidence="1">Pantothenic acid kinase</fullName>
    </alternativeName>
</protein>
<feature type="chain" id="PRO_0000267564" description="Type III pantothenate kinase">
    <location>
        <begin position="1"/>
        <end position="271"/>
    </location>
</feature>
<feature type="active site" description="Proton acceptor" evidence="1">
    <location>
        <position position="111"/>
    </location>
</feature>
<feature type="binding site" evidence="1">
    <location>
        <begin position="6"/>
        <end position="13"/>
    </location>
    <ligand>
        <name>ATP</name>
        <dbReference type="ChEBI" id="CHEBI:30616"/>
    </ligand>
</feature>
<feature type="binding site" evidence="1">
    <location>
        <begin position="109"/>
        <end position="112"/>
    </location>
    <ligand>
        <name>substrate</name>
    </ligand>
</feature>
<feature type="binding site" evidence="1">
    <location>
        <position position="131"/>
    </location>
    <ligand>
        <name>K(+)</name>
        <dbReference type="ChEBI" id="CHEBI:29103"/>
    </ligand>
</feature>
<feature type="binding site" evidence="1">
    <location>
        <position position="134"/>
    </location>
    <ligand>
        <name>ATP</name>
        <dbReference type="ChEBI" id="CHEBI:30616"/>
    </ligand>
</feature>
<feature type="binding site" evidence="1">
    <location>
        <position position="186"/>
    </location>
    <ligand>
        <name>substrate</name>
    </ligand>
</feature>